<evidence type="ECO:0000255" key="1"/>
<evidence type="ECO:0000255" key="2">
    <source>
        <dbReference type="PROSITE-ProRule" id="PRU00595"/>
    </source>
</evidence>
<evidence type="ECO:0000256" key="3">
    <source>
        <dbReference type="SAM" id="MobiDB-lite"/>
    </source>
</evidence>
<evidence type="ECO:0000269" key="4">
    <source>
    </source>
</evidence>
<evidence type="ECO:0000269" key="5">
    <source>
    </source>
</evidence>
<evidence type="ECO:0000269" key="6">
    <source>
    </source>
</evidence>
<evidence type="ECO:0000269" key="7">
    <source>
    </source>
</evidence>
<evidence type="ECO:0000303" key="8">
    <source>
    </source>
</evidence>
<evidence type="ECO:0000305" key="9"/>
<evidence type="ECO:0000312" key="10">
    <source>
        <dbReference type="Araport" id="AT3G57410"/>
    </source>
</evidence>
<evidence type="ECO:0000312" key="11">
    <source>
        <dbReference type="EMBL" id="CAB66098.1"/>
    </source>
</evidence>
<evidence type="ECO:0000312" key="12">
    <source>
        <dbReference type="EMBL" id="CAB68147.1"/>
    </source>
</evidence>
<evidence type="ECO:0007744" key="13">
    <source>
    </source>
</evidence>
<feature type="chain" id="PRO_0000218734" description="Villin-3">
    <location>
        <begin position="1"/>
        <end position="965"/>
    </location>
</feature>
<feature type="repeat" description="Gelsolin-like 1" evidence="1">
    <location>
        <begin position="27"/>
        <end position="79"/>
    </location>
</feature>
<feature type="repeat" description="Gelsolin-like 2" evidence="1">
    <location>
        <begin position="150"/>
        <end position="190"/>
    </location>
</feature>
<feature type="repeat" description="Gelsolin-like 3" evidence="1">
    <location>
        <begin position="262"/>
        <end position="304"/>
    </location>
</feature>
<feature type="repeat" description="Gelsolin-like 4" evidence="1">
    <location>
        <begin position="401"/>
        <end position="452"/>
    </location>
</feature>
<feature type="repeat" description="Gelsolin-like 5" evidence="1">
    <location>
        <begin position="533"/>
        <end position="573"/>
    </location>
</feature>
<feature type="repeat" description="Gelsolin-like 6" evidence="1">
    <location>
        <begin position="635"/>
        <end position="676"/>
    </location>
</feature>
<feature type="domain" description="HP" evidence="2">
    <location>
        <begin position="900"/>
        <end position="965"/>
    </location>
</feature>
<feature type="region of interest" description="Disordered" evidence="3">
    <location>
        <begin position="769"/>
        <end position="828"/>
    </location>
</feature>
<feature type="region of interest" description="Disordered" evidence="3">
    <location>
        <begin position="840"/>
        <end position="906"/>
    </location>
</feature>
<feature type="compositionally biased region" description="Low complexity" evidence="3">
    <location>
        <begin position="769"/>
        <end position="780"/>
    </location>
</feature>
<feature type="compositionally biased region" description="Low complexity" evidence="3">
    <location>
        <begin position="808"/>
        <end position="828"/>
    </location>
</feature>
<feature type="compositionally biased region" description="Acidic residues" evidence="3">
    <location>
        <begin position="865"/>
        <end position="879"/>
    </location>
</feature>
<feature type="modified residue" description="Phosphoserine" evidence="13">
    <location>
        <position position="880"/>
    </location>
</feature>
<feature type="sequence conflict" description="In Ref. 1; AAC31607." evidence="9" ref="1">
    <original>KA</original>
    <variation>ETS</variation>
    <location>
        <begin position="859"/>
        <end position="860"/>
    </location>
</feature>
<name>VILI3_ARATH</name>
<organism>
    <name type="scientific">Arabidopsis thaliana</name>
    <name type="common">Mouse-ear cress</name>
    <dbReference type="NCBI Taxonomy" id="3702"/>
    <lineage>
        <taxon>Eukaryota</taxon>
        <taxon>Viridiplantae</taxon>
        <taxon>Streptophyta</taxon>
        <taxon>Embryophyta</taxon>
        <taxon>Tracheophyta</taxon>
        <taxon>Spermatophyta</taxon>
        <taxon>Magnoliopsida</taxon>
        <taxon>eudicotyledons</taxon>
        <taxon>Gunneridae</taxon>
        <taxon>Pentapetalae</taxon>
        <taxon>rosids</taxon>
        <taxon>malvids</taxon>
        <taxon>Brassicales</taxon>
        <taxon>Brassicaceae</taxon>
        <taxon>Camelineae</taxon>
        <taxon>Arabidopsis</taxon>
    </lineage>
</organism>
<reference key="1">
    <citation type="journal article" date="2000" name="Plant Physiol.">
        <title>Villin-like actin-binding proteins are expressed ubiquitously in Arabidopsis.</title>
        <authorList>
            <person name="Klahre U."/>
            <person name="Friederich E."/>
            <person name="Kost B."/>
            <person name="Louvard D."/>
            <person name="Chua N.-H."/>
        </authorList>
    </citation>
    <scope>NUCLEOTIDE SEQUENCE [MRNA]</scope>
    <scope>TISSUE SPECIFICITY</scope>
    <scope>FUNCTION</scope>
    <scope>GENE FAMILY</scope>
    <scope>NOMENCLATURE</scope>
    <source>
        <strain>cv. Landsberg erecta</strain>
    </source>
</reference>
<reference key="2">
    <citation type="journal article" date="2000" name="Nature">
        <title>Sequence and analysis of chromosome 3 of the plant Arabidopsis thaliana.</title>
        <authorList>
            <person name="Salanoubat M."/>
            <person name="Lemcke K."/>
            <person name="Rieger M."/>
            <person name="Ansorge W."/>
            <person name="Unseld M."/>
            <person name="Fartmann B."/>
            <person name="Valle G."/>
            <person name="Bloecker H."/>
            <person name="Perez-Alonso M."/>
            <person name="Obermaier B."/>
            <person name="Delseny M."/>
            <person name="Boutry M."/>
            <person name="Grivell L.A."/>
            <person name="Mache R."/>
            <person name="Puigdomenech P."/>
            <person name="De Simone V."/>
            <person name="Choisne N."/>
            <person name="Artiguenave F."/>
            <person name="Robert C."/>
            <person name="Brottier P."/>
            <person name="Wincker P."/>
            <person name="Cattolico L."/>
            <person name="Weissenbach J."/>
            <person name="Saurin W."/>
            <person name="Quetier F."/>
            <person name="Schaefer M."/>
            <person name="Mueller-Auer S."/>
            <person name="Gabel C."/>
            <person name="Fuchs M."/>
            <person name="Benes V."/>
            <person name="Wurmbach E."/>
            <person name="Drzonek H."/>
            <person name="Erfle H."/>
            <person name="Jordan N."/>
            <person name="Bangert S."/>
            <person name="Wiedelmann R."/>
            <person name="Kranz H."/>
            <person name="Voss H."/>
            <person name="Holland R."/>
            <person name="Brandt P."/>
            <person name="Nyakatura G."/>
            <person name="Vezzi A."/>
            <person name="D'Angelo M."/>
            <person name="Pallavicini A."/>
            <person name="Toppo S."/>
            <person name="Simionati B."/>
            <person name="Conrad A."/>
            <person name="Hornischer K."/>
            <person name="Kauer G."/>
            <person name="Loehnert T.-H."/>
            <person name="Nordsiek G."/>
            <person name="Reichelt J."/>
            <person name="Scharfe M."/>
            <person name="Schoen O."/>
            <person name="Bargues M."/>
            <person name="Terol J."/>
            <person name="Climent J."/>
            <person name="Navarro P."/>
            <person name="Collado C."/>
            <person name="Perez-Perez A."/>
            <person name="Ottenwaelder B."/>
            <person name="Duchemin D."/>
            <person name="Cooke R."/>
            <person name="Laudie M."/>
            <person name="Berger-Llauro C."/>
            <person name="Purnelle B."/>
            <person name="Masuy D."/>
            <person name="de Haan M."/>
            <person name="Maarse A.C."/>
            <person name="Alcaraz J.-P."/>
            <person name="Cottet A."/>
            <person name="Casacuberta E."/>
            <person name="Monfort A."/>
            <person name="Argiriou A."/>
            <person name="Flores M."/>
            <person name="Liguori R."/>
            <person name="Vitale D."/>
            <person name="Mannhaupt G."/>
            <person name="Haase D."/>
            <person name="Schoof H."/>
            <person name="Rudd S."/>
            <person name="Zaccaria P."/>
            <person name="Mewes H.-W."/>
            <person name="Mayer K.F.X."/>
            <person name="Kaul S."/>
            <person name="Town C.D."/>
            <person name="Koo H.L."/>
            <person name="Tallon L.J."/>
            <person name="Jenkins J."/>
            <person name="Rooney T."/>
            <person name="Rizzo M."/>
            <person name="Walts A."/>
            <person name="Utterback T."/>
            <person name="Fujii C.Y."/>
            <person name="Shea T.P."/>
            <person name="Creasy T.H."/>
            <person name="Haas B."/>
            <person name="Maiti R."/>
            <person name="Wu D."/>
            <person name="Peterson J."/>
            <person name="Van Aken S."/>
            <person name="Pai G."/>
            <person name="Militscher J."/>
            <person name="Sellers P."/>
            <person name="Gill J.E."/>
            <person name="Feldblyum T.V."/>
            <person name="Preuss D."/>
            <person name="Lin X."/>
            <person name="Nierman W.C."/>
            <person name="Salzberg S.L."/>
            <person name="White O."/>
            <person name="Venter J.C."/>
            <person name="Fraser C.M."/>
            <person name="Kaneko T."/>
            <person name="Nakamura Y."/>
            <person name="Sato S."/>
            <person name="Kato T."/>
            <person name="Asamizu E."/>
            <person name="Sasamoto S."/>
            <person name="Kimura T."/>
            <person name="Idesawa K."/>
            <person name="Kawashima K."/>
            <person name="Kishida Y."/>
            <person name="Kiyokawa C."/>
            <person name="Kohara M."/>
            <person name="Matsumoto M."/>
            <person name="Matsuno A."/>
            <person name="Muraki A."/>
            <person name="Nakayama S."/>
            <person name="Nakazaki N."/>
            <person name="Shinpo S."/>
            <person name="Takeuchi C."/>
            <person name="Wada T."/>
            <person name="Watanabe A."/>
            <person name="Yamada M."/>
            <person name="Yasuda M."/>
            <person name="Tabata S."/>
        </authorList>
    </citation>
    <scope>NUCLEOTIDE SEQUENCE [LARGE SCALE GENOMIC DNA]</scope>
    <source>
        <strain>cv. Columbia</strain>
    </source>
</reference>
<reference key="3">
    <citation type="journal article" date="2017" name="Plant J.">
        <title>Araport11: a complete reannotation of the Arabidopsis thaliana reference genome.</title>
        <authorList>
            <person name="Cheng C.Y."/>
            <person name="Krishnakumar V."/>
            <person name="Chan A.P."/>
            <person name="Thibaud-Nissen F."/>
            <person name="Schobel S."/>
            <person name="Town C.D."/>
        </authorList>
    </citation>
    <scope>GENOME REANNOTATION</scope>
    <source>
        <strain>cv. Columbia</strain>
    </source>
</reference>
<reference key="4">
    <citation type="journal article" date="2009" name="DNA Res.">
        <title>Analysis of multiple occurrences of alternative splicing events in Arabidopsis thaliana using novel sequenced full-length cDNAs.</title>
        <authorList>
            <person name="Iida K."/>
            <person name="Fukami-Kobayashi K."/>
            <person name="Toyoda A."/>
            <person name="Sakaki Y."/>
            <person name="Kobayashi M."/>
            <person name="Seki M."/>
            <person name="Shinozaki K."/>
        </authorList>
    </citation>
    <scope>NUCLEOTIDE SEQUENCE [LARGE SCALE MRNA]</scope>
    <source>
        <strain>cv. Columbia</strain>
    </source>
</reference>
<reference key="5">
    <citation type="journal article" date="2009" name="Plant Physiol.">
        <title>Large-scale Arabidopsis phosphoproteome profiling reveals novel chloroplast kinase substrates and phosphorylation networks.</title>
        <authorList>
            <person name="Reiland S."/>
            <person name="Messerli G."/>
            <person name="Baerenfaller K."/>
            <person name="Gerrits B."/>
            <person name="Endler A."/>
            <person name="Grossmann J."/>
            <person name="Gruissem W."/>
            <person name="Baginsky S."/>
        </authorList>
    </citation>
    <scope>PHOSPHORYLATION [LARGE SCALE ANALYSIS] AT SER-880</scope>
    <scope>IDENTIFICATION BY MASS SPECTROMETRY [LARGE SCALE ANALYSIS]</scope>
</reference>
<reference key="6">
    <citation type="journal article" date="2010" name="Plant Cell">
        <title>Arabidopsis VILLIN1 and VILLIN3 have overlapping and distinct activities in actin bundle formation and turnover.</title>
        <authorList>
            <person name="Khurana P."/>
            <person name="Henty J.L."/>
            <person name="Huang S."/>
            <person name="Staiger A.M."/>
            <person name="Blanchoin L."/>
            <person name="Staiger C.J."/>
        </authorList>
    </citation>
    <scope>FUNCTION</scope>
    <scope>TISSUE SPECIFICITY</scope>
</reference>
<reference key="7">
    <citation type="journal article" date="2012" name="Plant J.">
        <title>Arabidopsis VILLIN2 and VILLIN3 act redundantly in sclerenchyma development via bundling of actin filaments.</title>
        <authorList>
            <person name="Bao C."/>
            <person name="Wang J."/>
            <person name="Zhang R."/>
            <person name="Zhang B."/>
            <person name="Zhang H."/>
            <person name="Zhou Y."/>
            <person name="Huang S."/>
        </authorList>
    </citation>
    <scope>FUNCTION</scope>
    <scope>TISSUE SPECIFICITY</scope>
    <scope>DISRUPTION PHENOTYPE</scope>
</reference>
<reference key="8">
    <citation type="journal article" date="2012" name="Plant Physiol.">
        <title>Arabidopsis VILLIN2 and VILLIN3 are required for the generation of thick actin filament bundles and for directional organ growth.</title>
        <authorList>
            <person name="van der Honing H.S."/>
            <person name="Kieft H."/>
            <person name="Emons A.M."/>
            <person name="Ketelaar T."/>
        </authorList>
    </citation>
    <scope>FUNCTION</scope>
    <scope>DISRUPTION PHENOTYPE</scope>
    <scope>DOMAIN</scope>
    <scope>TISSUE SPECIFICITY</scope>
    <scope>SUBCELLULAR LOCATION</scope>
</reference>
<keyword id="KW-0117">Actin capping</keyword>
<keyword id="KW-0009">Actin-binding</keyword>
<keyword id="KW-0106">Calcium</keyword>
<keyword id="KW-0963">Cytoplasm</keyword>
<keyword id="KW-0206">Cytoskeleton</keyword>
<keyword id="KW-0597">Phosphoprotein</keyword>
<keyword id="KW-1185">Reference proteome</keyword>
<keyword id="KW-0677">Repeat</keyword>
<dbReference type="EMBL" id="AF081203">
    <property type="protein sequence ID" value="AAC31607.1"/>
    <property type="molecule type" value="mRNA"/>
</dbReference>
<dbReference type="EMBL" id="AL133248">
    <property type="protein sequence ID" value="CAB66098.1"/>
    <property type="status" value="ALT_SEQ"/>
    <property type="molecule type" value="Genomic_DNA"/>
</dbReference>
<dbReference type="EMBL" id="AL137080">
    <property type="protein sequence ID" value="CAB68147.1"/>
    <property type="status" value="ALT_SEQ"/>
    <property type="molecule type" value="Genomic_DNA"/>
</dbReference>
<dbReference type="EMBL" id="CP002686">
    <property type="protein sequence ID" value="AEE79652.1"/>
    <property type="molecule type" value="Genomic_DNA"/>
</dbReference>
<dbReference type="EMBL" id="CP002686">
    <property type="protein sequence ID" value="ANM63565.1"/>
    <property type="molecule type" value="Genomic_DNA"/>
</dbReference>
<dbReference type="EMBL" id="CP002686">
    <property type="protein sequence ID" value="ANM63566.1"/>
    <property type="molecule type" value="Genomic_DNA"/>
</dbReference>
<dbReference type="EMBL" id="CP002686">
    <property type="protein sequence ID" value="ANM63567.1"/>
    <property type="molecule type" value="Genomic_DNA"/>
</dbReference>
<dbReference type="EMBL" id="CP002686">
    <property type="protein sequence ID" value="ANM63568.1"/>
    <property type="molecule type" value="Genomic_DNA"/>
</dbReference>
<dbReference type="EMBL" id="CP002686">
    <property type="protein sequence ID" value="ANM63569.1"/>
    <property type="molecule type" value="Genomic_DNA"/>
</dbReference>
<dbReference type="EMBL" id="CP002686">
    <property type="protein sequence ID" value="ANM63570.1"/>
    <property type="molecule type" value="Genomic_DNA"/>
</dbReference>
<dbReference type="EMBL" id="CP002686">
    <property type="protein sequence ID" value="ANM63572.1"/>
    <property type="molecule type" value="Genomic_DNA"/>
</dbReference>
<dbReference type="EMBL" id="AK318626">
    <property type="protein sequence ID" value="BAH56741.1"/>
    <property type="molecule type" value="mRNA"/>
</dbReference>
<dbReference type="PIR" id="T50668">
    <property type="entry name" value="T50668"/>
</dbReference>
<dbReference type="RefSeq" id="NP_001319779.1">
    <property type="nucleotide sequence ID" value="NM_001339858.1"/>
</dbReference>
<dbReference type="RefSeq" id="NP_001325645.1">
    <property type="nucleotide sequence ID" value="NM_001339860.1"/>
</dbReference>
<dbReference type="RefSeq" id="NP_001325646.1">
    <property type="nucleotide sequence ID" value="NM_001339866.1"/>
</dbReference>
<dbReference type="RefSeq" id="NP_001325647.1">
    <property type="nucleotide sequence ID" value="NM_001339863.1"/>
</dbReference>
<dbReference type="RefSeq" id="NP_001325648.1">
    <property type="nucleotide sequence ID" value="NM_001339862.1"/>
</dbReference>
<dbReference type="RefSeq" id="NP_001325649.1">
    <property type="nucleotide sequence ID" value="NM_001339865.1"/>
</dbReference>
<dbReference type="RefSeq" id="NP_001325651.1">
    <property type="nucleotide sequence ID" value="NM_001339861.1"/>
</dbReference>
<dbReference type="RefSeq" id="NP_567048.1">
    <property type="nucleotide sequence ID" value="NM_115601.3"/>
</dbReference>
<dbReference type="SMR" id="O81645"/>
<dbReference type="BioGRID" id="10224">
    <property type="interactions" value="3"/>
</dbReference>
<dbReference type="FunCoup" id="O81645">
    <property type="interactions" value="910"/>
</dbReference>
<dbReference type="STRING" id="3702.O81645"/>
<dbReference type="GlyGen" id="O81645">
    <property type="glycosylation" value="1 site"/>
</dbReference>
<dbReference type="iPTMnet" id="O81645"/>
<dbReference type="PaxDb" id="3702-AT3G57410.1"/>
<dbReference type="ProteomicsDB" id="242331"/>
<dbReference type="EnsemblPlants" id="AT3G57410.1">
    <property type="protein sequence ID" value="AT3G57410.1"/>
    <property type="gene ID" value="AT3G57410"/>
</dbReference>
<dbReference type="EnsemblPlants" id="AT3G57410.2">
    <property type="protein sequence ID" value="AT3G57410.2"/>
    <property type="gene ID" value="AT3G57410"/>
</dbReference>
<dbReference type="EnsemblPlants" id="AT3G57410.3">
    <property type="protein sequence ID" value="AT3G57410.3"/>
    <property type="gene ID" value="AT3G57410"/>
</dbReference>
<dbReference type="EnsemblPlants" id="AT3G57410.4">
    <property type="protein sequence ID" value="AT3G57410.4"/>
    <property type="gene ID" value="AT3G57410"/>
</dbReference>
<dbReference type="EnsemblPlants" id="AT3G57410.5">
    <property type="protein sequence ID" value="AT3G57410.5"/>
    <property type="gene ID" value="AT3G57410"/>
</dbReference>
<dbReference type="EnsemblPlants" id="AT3G57410.7">
    <property type="protein sequence ID" value="AT3G57410.7"/>
    <property type="gene ID" value="AT3G57410"/>
</dbReference>
<dbReference type="EnsemblPlants" id="AT3G57410.8">
    <property type="protein sequence ID" value="AT3G57410.8"/>
    <property type="gene ID" value="AT3G57410"/>
</dbReference>
<dbReference type="EnsemblPlants" id="AT3G57410.9">
    <property type="protein sequence ID" value="AT3G57410.9"/>
    <property type="gene ID" value="AT3G57410"/>
</dbReference>
<dbReference type="GeneID" id="824908"/>
<dbReference type="Gramene" id="AT3G57410.1">
    <property type="protein sequence ID" value="AT3G57410.1"/>
    <property type="gene ID" value="AT3G57410"/>
</dbReference>
<dbReference type="Gramene" id="AT3G57410.2">
    <property type="protein sequence ID" value="AT3G57410.2"/>
    <property type="gene ID" value="AT3G57410"/>
</dbReference>
<dbReference type="Gramene" id="AT3G57410.3">
    <property type="protein sequence ID" value="AT3G57410.3"/>
    <property type="gene ID" value="AT3G57410"/>
</dbReference>
<dbReference type="Gramene" id="AT3G57410.4">
    <property type="protein sequence ID" value="AT3G57410.4"/>
    <property type="gene ID" value="AT3G57410"/>
</dbReference>
<dbReference type="Gramene" id="AT3G57410.5">
    <property type="protein sequence ID" value="AT3G57410.5"/>
    <property type="gene ID" value="AT3G57410"/>
</dbReference>
<dbReference type="Gramene" id="AT3G57410.7">
    <property type="protein sequence ID" value="AT3G57410.7"/>
    <property type="gene ID" value="AT3G57410"/>
</dbReference>
<dbReference type="Gramene" id="AT3G57410.8">
    <property type="protein sequence ID" value="AT3G57410.8"/>
    <property type="gene ID" value="AT3G57410"/>
</dbReference>
<dbReference type="Gramene" id="AT3G57410.9">
    <property type="protein sequence ID" value="AT3G57410.9"/>
    <property type="gene ID" value="AT3G57410"/>
</dbReference>
<dbReference type="KEGG" id="ath:AT3G57410"/>
<dbReference type="Araport" id="AT3G57410"/>
<dbReference type="TAIR" id="AT3G57410">
    <property type="gene designation" value="VLN3"/>
</dbReference>
<dbReference type="eggNOG" id="KOG0443">
    <property type="taxonomic scope" value="Eukaryota"/>
</dbReference>
<dbReference type="HOGENOM" id="CLU_002568_2_0_1"/>
<dbReference type="InParanoid" id="O81645"/>
<dbReference type="PRO" id="PR:O81645"/>
<dbReference type="Proteomes" id="UP000006548">
    <property type="component" value="Chromosome 3"/>
</dbReference>
<dbReference type="ExpressionAtlas" id="O81645">
    <property type="expression patterns" value="baseline and differential"/>
</dbReference>
<dbReference type="GO" id="GO:0005884">
    <property type="term" value="C:actin filament"/>
    <property type="evidence" value="ECO:0000314"/>
    <property type="project" value="TAIR"/>
</dbReference>
<dbReference type="GO" id="GO:0005737">
    <property type="term" value="C:cytoplasm"/>
    <property type="evidence" value="ECO:0000314"/>
    <property type="project" value="TAIR"/>
</dbReference>
<dbReference type="GO" id="GO:0005829">
    <property type="term" value="C:cytosol"/>
    <property type="evidence" value="ECO:0007005"/>
    <property type="project" value="TAIR"/>
</dbReference>
<dbReference type="GO" id="GO:0051015">
    <property type="term" value="F:actin filament binding"/>
    <property type="evidence" value="ECO:0000314"/>
    <property type="project" value="TAIR"/>
</dbReference>
<dbReference type="GO" id="GO:0003729">
    <property type="term" value="F:mRNA binding"/>
    <property type="evidence" value="ECO:0000314"/>
    <property type="project" value="TAIR"/>
</dbReference>
<dbReference type="GO" id="GO:0051017">
    <property type="term" value="P:actin filament bundle assembly"/>
    <property type="evidence" value="ECO:0000314"/>
    <property type="project" value="TAIR"/>
</dbReference>
<dbReference type="GO" id="GO:0051693">
    <property type="term" value="P:actin filament capping"/>
    <property type="evidence" value="ECO:0007669"/>
    <property type="project" value="UniProtKB-KW"/>
</dbReference>
<dbReference type="GO" id="GO:0051014">
    <property type="term" value="P:actin filament severing"/>
    <property type="evidence" value="ECO:0000314"/>
    <property type="project" value="TAIR"/>
</dbReference>
<dbReference type="CDD" id="cd11290">
    <property type="entry name" value="gelsolin_S1_like"/>
    <property type="match status" value="1"/>
</dbReference>
<dbReference type="CDD" id="cd11289">
    <property type="entry name" value="gelsolin_S2_like"/>
    <property type="match status" value="1"/>
</dbReference>
<dbReference type="CDD" id="cd11292">
    <property type="entry name" value="gelsolin_S3_like"/>
    <property type="match status" value="1"/>
</dbReference>
<dbReference type="CDD" id="cd11293">
    <property type="entry name" value="gelsolin_S4_like"/>
    <property type="match status" value="1"/>
</dbReference>
<dbReference type="CDD" id="cd11288">
    <property type="entry name" value="gelsolin_S5_like"/>
    <property type="match status" value="1"/>
</dbReference>
<dbReference type="CDD" id="cd11291">
    <property type="entry name" value="gelsolin_S6_like"/>
    <property type="match status" value="1"/>
</dbReference>
<dbReference type="FunFam" id="3.40.20.10:FF:000001">
    <property type="entry name" value="Gelsolin"/>
    <property type="match status" value="1"/>
</dbReference>
<dbReference type="FunFam" id="3.40.20.10:FF:000002">
    <property type="entry name" value="Gelsolin"/>
    <property type="match status" value="1"/>
</dbReference>
<dbReference type="FunFam" id="1.10.950.10:FF:000006">
    <property type="entry name" value="Villin-2"/>
    <property type="match status" value="1"/>
</dbReference>
<dbReference type="FunFam" id="3.40.20.10:FF:000039">
    <property type="entry name" value="Villin-4"/>
    <property type="match status" value="1"/>
</dbReference>
<dbReference type="FunFam" id="3.40.20.10:FF:000028">
    <property type="entry name" value="Villin-like 1"/>
    <property type="match status" value="1"/>
</dbReference>
<dbReference type="FunFam" id="3.40.20.10:FF:000038">
    <property type="entry name" value="Villin-like 1"/>
    <property type="match status" value="1"/>
</dbReference>
<dbReference type="Gene3D" id="3.40.20.10">
    <property type="entry name" value="Severin"/>
    <property type="match status" value="6"/>
</dbReference>
<dbReference type="Gene3D" id="1.10.950.10">
    <property type="entry name" value="Villin headpiece domain"/>
    <property type="match status" value="1"/>
</dbReference>
<dbReference type="InterPro" id="IPR029006">
    <property type="entry name" value="ADF-H/Gelsolin-like_dom_sf"/>
</dbReference>
<dbReference type="InterPro" id="IPR007123">
    <property type="entry name" value="Gelsolin-like_dom"/>
</dbReference>
<dbReference type="InterPro" id="IPR007122">
    <property type="entry name" value="Villin/Gelsolin"/>
</dbReference>
<dbReference type="InterPro" id="IPR003128">
    <property type="entry name" value="Villin_headpiece"/>
</dbReference>
<dbReference type="InterPro" id="IPR036886">
    <property type="entry name" value="Villin_headpiece_dom_sf"/>
</dbReference>
<dbReference type="PANTHER" id="PTHR11977">
    <property type="entry name" value="VILLIN"/>
    <property type="match status" value="1"/>
</dbReference>
<dbReference type="PANTHER" id="PTHR11977:SF101">
    <property type="entry name" value="VILLIN-3"/>
    <property type="match status" value="1"/>
</dbReference>
<dbReference type="Pfam" id="PF00626">
    <property type="entry name" value="Gelsolin"/>
    <property type="match status" value="6"/>
</dbReference>
<dbReference type="Pfam" id="PF02209">
    <property type="entry name" value="VHP"/>
    <property type="match status" value="1"/>
</dbReference>
<dbReference type="PRINTS" id="PR00597">
    <property type="entry name" value="GELSOLIN"/>
</dbReference>
<dbReference type="SMART" id="SM00262">
    <property type="entry name" value="GEL"/>
    <property type="match status" value="6"/>
</dbReference>
<dbReference type="SMART" id="SM00153">
    <property type="entry name" value="VHP"/>
    <property type="match status" value="1"/>
</dbReference>
<dbReference type="SUPFAM" id="SSF55753">
    <property type="entry name" value="Actin depolymerizing proteins"/>
    <property type="match status" value="6"/>
</dbReference>
<dbReference type="SUPFAM" id="SSF47050">
    <property type="entry name" value="VHP, Villin headpiece domain"/>
    <property type="match status" value="1"/>
</dbReference>
<dbReference type="PROSITE" id="PS51089">
    <property type="entry name" value="HP"/>
    <property type="match status" value="1"/>
</dbReference>
<sequence>MSGSTKVLDPAFQGVGQKPGTEIWRIENFEPVPVPKSEHGKFYMGDTYIVLQTTQNKGGAYLFDIHFWIGKDTSQDEAGTAAVKTVELDAALGGRAVQYREIQGHESDKFLSYFKPCIIPLEGGVASGFKKPEEEEFETRLYTCKGKRAVHLKQVPFARSSLNHDDVFILDTKEKIYQFNGANSNIQERAKALVVIQYLKDKFHEGTSDVAIVDDGKLDTESDSGEFWVLFGGFAPIARKVASEDEIIPETTPPKLYSIADGQVESIDGDLSKSMLENNKCYLLDCGSEIFIWVGRVTQVEERKTAIQAAEDFVASENRPKATRITRVIQGYEPHSFKSNFDSWPSGSATPANEEGRGKVAALLKQQGVGLKGLSKSTPVNEDIPPLLEGGGKLEVWYIDANSKTVLSKDHVGKLYSGDCYLVLYTYHSGERKEDYFLCCWFGKNSNQEDQETAVRLASTMTNSLKGRPVQARIFEGKEPPQFVALFQHMVVLKGGLSSGYKNSMTEKGSSGETYTPESIALIQVSGTGVHNNKALQVEAVATSLNSYDCFLLQSGTSMFLWVGNHSTHEQQELAAKVAEFLKPGTTIKHAKEGTESSSFWFALGGKQNFTSKKVSSETVRDPHLFSFSFNRGKFQVEEIHNFDQDDLLTEEMHLLDTHAEVFVWVGQCVDPKEKQTAFEIGQRYINLAGSLEGLSPKVPLYKITEGNEPCFFTTYFSWDSTKATVQGNSYQKKAALLLGTHHVVEDQSSSGNQGPRQRAAALAALTSAFNSSSGRTSSPSRDRSNGSQGGPRQRAEALAALTSAFNSSPSSKSPPRRSGLTSQASQRAAAVAALSQVLTAEKKKSPDTSPSAEAKDEKAFSEVEATEEATEAKEEEEVSPAAEASAEEAKPKQDDSEVETTGVTFTYERLQAKSEKPVTGIDFKRREAYLSEVEFKTVFGMEKESFYKLPGWKQDLLKKKFNLF</sequence>
<gene>
    <name evidence="8" type="primary">VLN3</name>
    <name evidence="10" type="ordered locus">At3g57410</name>
    <name evidence="12" type="ORF">F28O9.260</name>
    <name evidence="11" type="ORF">T8H10.10</name>
</gene>
<accession>O81645</accession>
<accession>A0A1I9LLW4</accession>
<accession>C0Z212</accession>
<accession>Q9LEA4</accession>
<accession>Q9SCN1</accession>
<comment type="function">
    <text evidence="4 5 6 7">Binds actin and actin filament bundles in a Ca(2+)-insensitive manner, but severs actin filaments in a calcium-dependent manner, regardless of the presence or not of VLN1 (AC O81643). Acts redundantly with VLN2 (AC O81644) to generate thick actin filament bundles, to regulate directional organ growth (PubMed:22209875) and in sclerenchyma development (PubMed:22563899).</text>
</comment>
<comment type="subcellular location">
    <subcellularLocation>
        <location evidence="4 6">Cytoplasm</location>
        <location evidence="4 6">Cytoskeleton</location>
    </subcellularLocation>
</comment>
<comment type="tissue specificity">
    <text evidence="4 5 6 7">Expressed in all tissues examined, including root hairs.</text>
</comment>
<comment type="domain">
    <text evidence="6">The HP domain is important for the localization to actin filament bundles.</text>
</comment>
<comment type="disruption phenotype">
    <text evidence="6 7">No visible phenotype. Vln2 and vln3 double mutants show absence of thick actin filament bundles in the cells, anomaly in the growth direction of organs (PubMed:22209875) and defects in sclerenchyma development, but no alterations in the secondary cell-wall machinery (PubMed:22563899).</text>
</comment>
<comment type="similarity">
    <text evidence="9">Belongs to the villin/gelsolin family.</text>
</comment>
<comment type="sequence caution" evidence="9">
    <conflict type="erroneous gene model prediction">
        <sequence resource="EMBL-CDS" id="CAB66098"/>
    </conflict>
</comment>
<comment type="sequence caution" evidence="9">
    <conflict type="erroneous gene model prediction">
        <sequence resource="EMBL-CDS" id="CAB68147"/>
    </conflict>
</comment>
<proteinExistence type="evidence at protein level"/>
<protein>
    <recommendedName>
        <fullName evidence="8">Villin-3</fullName>
    </recommendedName>
</protein>